<dbReference type="EC" id="7.6.2.5" evidence="1"/>
<dbReference type="EMBL" id="CP000230">
    <property type="protein sequence ID" value="ABC20845.1"/>
    <property type="molecule type" value="Genomic_DNA"/>
</dbReference>
<dbReference type="RefSeq" id="WP_011387801.1">
    <property type="nucleotide sequence ID" value="NC_007643.1"/>
</dbReference>
<dbReference type="RefSeq" id="YP_425132.1">
    <property type="nucleotide sequence ID" value="NC_007643.1"/>
</dbReference>
<dbReference type="SMR" id="Q2RYF0"/>
<dbReference type="STRING" id="269796.Rru_A0040"/>
<dbReference type="EnsemblBacteria" id="ABC20845">
    <property type="protein sequence ID" value="ABC20845"/>
    <property type="gene ID" value="Rru_A0040"/>
</dbReference>
<dbReference type="KEGG" id="rru:Rru_A0040"/>
<dbReference type="PATRIC" id="fig|269796.9.peg.89"/>
<dbReference type="eggNOG" id="COG4133">
    <property type="taxonomic scope" value="Bacteria"/>
</dbReference>
<dbReference type="HOGENOM" id="CLU_000604_1_2_5"/>
<dbReference type="PhylomeDB" id="Q2RYF0"/>
<dbReference type="Proteomes" id="UP000001929">
    <property type="component" value="Chromosome"/>
</dbReference>
<dbReference type="GO" id="GO:0005886">
    <property type="term" value="C:plasma membrane"/>
    <property type="evidence" value="ECO:0007669"/>
    <property type="project" value="UniProtKB-SubCell"/>
</dbReference>
<dbReference type="GO" id="GO:0015439">
    <property type="term" value="F:ABC-type heme transporter activity"/>
    <property type="evidence" value="ECO:0007669"/>
    <property type="project" value="UniProtKB-EC"/>
</dbReference>
<dbReference type="GO" id="GO:0005524">
    <property type="term" value="F:ATP binding"/>
    <property type="evidence" value="ECO:0007669"/>
    <property type="project" value="UniProtKB-KW"/>
</dbReference>
<dbReference type="GO" id="GO:0016887">
    <property type="term" value="F:ATP hydrolysis activity"/>
    <property type="evidence" value="ECO:0007669"/>
    <property type="project" value="InterPro"/>
</dbReference>
<dbReference type="GO" id="GO:0017004">
    <property type="term" value="P:cytochrome complex assembly"/>
    <property type="evidence" value="ECO:0007669"/>
    <property type="project" value="UniProtKB-KW"/>
</dbReference>
<dbReference type="Gene3D" id="3.40.50.300">
    <property type="entry name" value="P-loop containing nucleotide triphosphate hydrolases"/>
    <property type="match status" value="1"/>
</dbReference>
<dbReference type="InterPro" id="IPR003593">
    <property type="entry name" value="AAA+_ATPase"/>
</dbReference>
<dbReference type="InterPro" id="IPR003439">
    <property type="entry name" value="ABC_transporter-like_ATP-bd"/>
</dbReference>
<dbReference type="InterPro" id="IPR017871">
    <property type="entry name" value="ABC_transporter-like_CS"/>
</dbReference>
<dbReference type="InterPro" id="IPR005895">
    <property type="entry name" value="ABC_transptr_haem_export_CcmA"/>
</dbReference>
<dbReference type="InterPro" id="IPR027417">
    <property type="entry name" value="P-loop_NTPase"/>
</dbReference>
<dbReference type="NCBIfam" id="TIGR01189">
    <property type="entry name" value="ccmA"/>
    <property type="match status" value="1"/>
</dbReference>
<dbReference type="NCBIfam" id="NF010061">
    <property type="entry name" value="PRK13538.1"/>
    <property type="match status" value="1"/>
</dbReference>
<dbReference type="PANTHER" id="PTHR43499">
    <property type="entry name" value="ABC TRANSPORTER I FAMILY MEMBER 1"/>
    <property type="match status" value="1"/>
</dbReference>
<dbReference type="PANTHER" id="PTHR43499:SF1">
    <property type="entry name" value="ABC TRANSPORTER I FAMILY MEMBER 1"/>
    <property type="match status" value="1"/>
</dbReference>
<dbReference type="Pfam" id="PF00005">
    <property type="entry name" value="ABC_tran"/>
    <property type="match status" value="1"/>
</dbReference>
<dbReference type="SMART" id="SM00382">
    <property type="entry name" value="AAA"/>
    <property type="match status" value="1"/>
</dbReference>
<dbReference type="SUPFAM" id="SSF52540">
    <property type="entry name" value="P-loop containing nucleoside triphosphate hydrolases"/>
    <property type="match status" value="1"/>
</dbReference>
<dbReference type="PROSITE" id="PS00211">
    <property type="entry name" value="ABC_TRANSPORTER_1"/>
    <property type="match status" value="1"/>
</dbReference>
<dbReference type="PROSITE" id="PS50893">
    <property type="entry name" value="ABC_TRANSPORTER_2"/>
    <property type="match status" value="1"/>
</dbReference>
<dbReference type="PROSITE" id="PS51243">
    <property type="entry name" value="CCMA"/>
    <property type="match status" value="1"/>
</dbReference>
<name>CCMA_RHORT</name>
<keyword id="KW-0067">ATP-binding</keyword>
<keyword id="KW-0997">Cell inner membrane</keyword>
<keyword id="KW-1003">Cell membrane</keyword>
<keyword id="KW-0201">Cytochrome c-type biogenesis</keyword>
<keyword id="KW-0472">Membrane</keyword>
<keyword id="KW-0547">Nucleotide-binding</keyword>
<keyword id="KW-1185">Reference proteome</keyword>
<keyword id="KW-1278">Translocase</keyword>
<keyword id="KW-0813">Transport</keyword>
<reference key="1">
    <citation type="journal article" date="2011" name="Stand. Genomic Sci.">
        <title>Complete genome sequence of Rhodospirillum rubrum type strain (S1).</title>
        <authorList>
            <person name="Munk A.C."/>
            <person name="Copeland A."/>
            <person name="Lucas S."/>
            <person name="Lapidus A."/>
            <person name="Del Rio T.G."/>
            <person name="Barry K."/>
            <person name="Detter J.C."/>
            <person name="Hammon N."/>
            <person name="Israni S."/>
            <person name="Pitluck S."/>
            <person name="Brettin T."/>
            <person name="Bruce D."/>
            <person name="Han C."/>
            <person name="Tapia R."/>
            <person name="Gilna P."/>
            <person name="Schmutz J."/>
            <person name="Larimer F."/>
            <person name="Land M."/>
            <person name="Kyrpides N.C."/>
            <person name="Mavromatis K."/>
            <person name="Richardson P."/>
            <person name="Rohde M."/>
            <person name="Goeker M."/>
            <person name="Klenk H.P."/>
            <person name="Zhang Y."/>
            <person name="Roberts G.P."/>
            <person name="Reslewic S."/>
            <person name="Schwartz D.C."/>
        </authorList>
    </citation>
    <scope>NUCLEOTIDE SEQUENCE [LARGE SCALE GENOMIC DNA]</scope>
    <source>
        <strain>ATCC 11170 / ATH 1.1.1 / DSM 467 / LMG 4362 / NCIMB 8255 / S1</strain>
    </source>
</reference>
<accession>Q2RYF0</accession>
<gene>
    <name evidence="1" type="primary">ccmA</name>
    <name type="ordered locus">Rru_A0040</name>
</gene>
<organism>
    <name type="scientific">Rhodospirillum rubrum (strain ATCC 11170 / ATH 1.1.1 / DSM 467 / LMG 4362 / NCIMB 8255 / S1)</name>
    <dbReference type="NCBI Taxonomy" id="269796"/>
    <lineage>
        <taxon>Bacteria</taxon>
        <taxon>Pseudomonadati</taxon>
        <taxon>Pseudomonadota</taxon>
        <taxon>Alphaproteobacteria</taxon>
        <taxon>Rhodospirillales</taxon>
        <taxon>Rhodospirillaceae</taxon>
        <taxon>Rhodospirillum</taxon>
    </lineage>
</organism>
<feature type="chain" id="PRO_0000271952" description="Cytochrome c biogenesis ATP-binding export protein CcmA">
    <location>
        <begin position="1"/>
        <end position="233"/>
    </location>
</feature>
<feature type="domain" description="ABC transporter" evidence="1">
    <location>
        <begin position="17"/>
        <end position="233"/>
    </location>
</feature>
<feature type="binding site" evidence="1">
    <location>
        <begin position="49"/>
        <end position="56"/>
    </location>
    <ligand>
        <name>ATP</name>
        <dbReference type="ChEBI" id="CHEBI:30616"/>
    </ligand>
</feature>
<evidence type="ECO:0000255" key="1">
    <source>
        <dbReference type="HAMAP-Rule" id="MF_01707"/>
    </source>
</evidence>
<proteinExistence type="inferred from homology"/>
<comment type="function">
    <text evidence="1">Part of the ABC transporter complex CcmAB involved in the biogenesis of c-type cytochromes; once thought to export heme, this seems not to be the case, but its exact role is uncertain. Responsible for energy coupling to the transport system.</text>
</comment>
<comment type="catalytic activity">
    <reaction evidence="1">
        <text>heme b(in) + ATP + H2O = heme b(out) + ADP + phosphate + H(+)</text>
        <dbReference type="Rhea" id="RHEA:19261"/>
        <dbReference type="ChEBI" id="CHEBI:15377"/>
        <dbReference type="ChEBI" id="CHEBI:15378"/>
        <dbReference type="ChEBI" id="CHEBI:30616"/>
        <dbReference type="ChEBI" id="CHEBI:43474"/>
        <dbReference type="ChEBI" id="CHEBI:60344"/>
        <dbReference type="ChEBI" id="CHEBI:456216"/>
        <dbReference type="EC" id="7.6.2.5"/>
    </reaction>
</comment>
<comment type="subunit">
    <text evidence="1">The complex is composed of two ATP-binding proteins (CcmA) and two transmembrane proteins (CcmB).</text>
</comment>
<comment type="subcellular location">
    <subcellularLocation>
        <location evidence="1">Cell inner membrane</location>
        <topology evidence="1">Peripheral membrane protein</topology>
    </subcellularLocation>
</comment>
<comment type="similarity">
    <text evidence="1">Belongs to the ABC transporter superfamily. CcmA exporter (TC 3.A.1.107) family.</text>
</comment>
<protein>
    <recommendedName>
        <fullName evidence="1">Cytochrome c biogenesis ATP-binding export protein CcmA</fullName>
        <ecNumber evidence="1">7.6.2.5</ecNumber>
    </recommendedName>
    <alternativeName>
        <fullName evidence="1">Heme exporter protein A</fullName>
    </alternativeName>
</protein>
<sequence>MIVPPDSAGFPEAPAIFAGEDLLCVRGERAIFAGLSFRLAPGGALLLLGPNGSGKSSLLRLLALLLRPAAGRLTWGGQAVAADPEAHGGRCHYVGHLDAIKPVLALRENVAFWAKLAGAGETHVDRALKAFALAPLATIPGRMLSAGQKRRANLARLIAAPAPLWLLDEPTTALDRASIGVLEDLIARHRAAGGMVVVSTHQDITLPGATVLALDHFAPDPSRAAGLFLEDEG</sequence>